<reference key="1">
    <citation type="journal article" date="2010" name="Environ. Microbiol.">
        <title>The genome of Syntrophomonas wolfei: new insights into syntrophic metabolism and biohydrogen production.</title>
        <authorList>
            <person name="Sieber J.R."/>
            <person name="Sims D.R."/>
            <person name="Han C."/>
            <person name="Kim E."/>
            <person name="Lykidis A."/>
            <person name="Lapidus A.L."/>
            <person name="McDonnald E."/>
            <person name="Rohlin L."/>
            <person name="Culley D.E."/>
            <person name="Gunsalus R."/>
            <person name="McInerney M.J."/>
        </authorList>
    </citation>
    <scope>NUCLEOTIDE SEQUENCE [LARGE SCALE GENOMIC DNA]</scope>
    <source>
        <strain>DSM 2245B / Goettingen</strain>
    </source>
</reference>
<name>RL19_SYNWW</name>
<organism>
    <name type="scientific">Syntrophomonas wolfei subsp. wolfei (strain DSM 2245B / Goettingen)</name>
    <dbReference type="NCBI Taxonomy" id="335541"/>
    <lineage>
        <taxon>Bacteria</taxon>
        <taxon>Bacillati</taxon>
        <taxon>Bacillota</taxon>
        <taxon>Clostridia</taxon>
        <taxon>Eubacteriales</taxon>
        <taxon>Syntrophomonadaceae</taxon>
        <taxon>Syntrophomonas</taxon>
    </lineage>
</organism>
<dbReference type="EMBL" id="CP000448">
    <property type="protein sequence ID" value="ABI68795.1"/>
    <property type="molecule type" value="Genomic_DNA"/>
</dbReference>
<dbReference type="RefSeq" id="WP_011640894.1">
    <property type="nucleotide sequence ID" value="NC_008346.1"/>
</dbReference>
<dbReference type="SMR" id="Q0AWV9"/>
<dbReference type="STRING" id="335541.Swol_1491"/>
<dbReference type="KEGG" id="swo:Swol_1491"/>
<dbReference type="eggNOG" id="COG0335">
    <property type="taxonomic scope" value="Bacteria"/>
</dbReference>
<dbReference type="HOGENOM" id="CLU_103507_2_1_9"/>
<dbReference type="OrthoDB" id="9803541at2"/>
<dbReference type="Proteomes" id="UP000001968">
    <property type="component" value="Chromosome"/>
</dbReference>
<dbReference type="GO" id="GO:0022625">
    <property type="term" value="C:cytosolic large ribosomal subunit"/>
    <property type="evidence" value="ECO:0007669"/>
    <property type="project" value="TreeGrafter"/>
</dbReference>
<dbReference type="GO" id="GO:0003735">
    <property type="term" value="F:structural constituent of ribosome"/>
    <property type="evidence" value="ECO:0007669"/>
    <property type="project" value="InterPro"/>
</dbReference>
<dbReference type="GO" id="GO:0006412">
    <property type="term" value="P:translation"/>
    <property type="evidence" value="ECO:0007669"/>
    <property type="project" value="UniProtKB-UniRule"/>
</dbReference>
<dbReference type="FunFam" id="2.30.30.790:FF:000001">
    <property type="entry name" value="50S ribosomal protein L19"/>
    <property type="match status" value="1"/>
</dbReference>
<dbReference type="Gene3D" id="2.30.30.790">
    <property type="match status" value="1"/>
</dbReference>
<dbReference type="HAMAP" id="MF_00402">
    <property type="entry name" value="Ribosomal_bL19"/>
    <property type="match status" value="1"/>
</dbReference>
<dbReference type="InterPro" id="IPR001857">
    <property type="entry name" value="Ribosomal_bL19"/>
</dbReference>
<dbReference type="InterPro" id="IPR018257">
    <property type="entry name" value="Ribosomal_bL19_CS"/>
</dbReference>
<dbReference type="InterPro" id="IPR038657">
    <property type="entry name" value="Ribosomal_bL19_sf"/>
</dbReference>
<dbReference type="InterPro" id="IPR008991">
    <property type="entry name" value="Translation_prot_SH3-like_sf"/>
</dbReference>
<dbReference type="NCBIfam" id="TIGR01024">
    <property type="entry name" value="rplS_bact"/>
    <property type="match status" value="1"/>
</dbReference>
<dbReference type="PANTHER" id="PTHR15680:SF9">
    <property type="entry name" value="LARGE RIBOSOMAL SUBUNIT PROTEIN BL19M"/>
    <property type="match status" value="1"/>
</dbReference>
<dbReference type="PANTHER" id="PTHR15680">
    <property type="entry name" value="RIBOSOMAL PROTEIN L19"/>
    <property type="match status" value="1"/>
</dbReference>
<dbReference type="Pfam" id="PF01245">
    <property type="entry name" value="Ribosomal_L19"/>
    <property type="match status" value="1"/>
</dbReference>
<dbReference type="PIRSF" id="PIRSF002191">
    <property type="entry name" value="Ribosomal_L19"/>
    <property type="match status" value="1"/>
</dbReference>
<dbReference type="PRINTS" id="PR00061">
    <property type="entry name" value="RIBOSOMALL19"/>
</dbReference>
<dbReference type="SUPFAM" id="SSF50104">
    <property type="entry name" value="Translation proteins SH3-like domain"/>
    <property type="match status" value="1"/>
</dbReference>
<dbReference type="PROSITE" id="PS01015">
    <property type="entry name" value="RIBOSOMAL_L19"/>
    <property type="match status" value="1"/>
</dbReference>
<protein>
    <recommendedName>
        <fullName evidence="1">Large ribosomal subunit protein bL19</fullName>
    </recommendedName>
    <alternativeName>
        <fullName evidence="2">50S ribosomal protein L19</fullName>
    </alternativeName>
</protein>
<accession>Q0AWV9</accession>
<keyword id="KW-1185">Reference proteome</keyword>
<keyword id="KW-0687">Ribonucleoprotein</keyword>
<keyword id="KW-0689">Ribosomal protein</keyword>
<evidence type="ECO:0000255" key="1">
    <source>
        <dbReference type="HAMAP-Rule" id="MF_00402"/>
    </source>
</evidence>
<evidence type="ECO:0000305" key="2"/>
<gene>
    <name evidence="1" type="primary">rplS</name>
    <name type="ordered locus">Swol_1491</name>
</gene>
<comment type="function">
    <text evidence="1">This protein is located at the 30S-50S ribosomal subunit interface and may play a role in the structure and function of the aminoacyl-tRNA binding site.</text>
</comment>
<comment type="similarity">
    <text evidence="1">Belongs to the bacterial ribosomal protein bL19 family.</text>
</comment>
<sequence length="116" mass="13433">MQNIIKSIEEEYYKKDLPRFGPGDTVKVHVKVVEGTRERLQVFEGTVIKIRGTGLSQTFTVRRTTSGVGVERTFPLHSPKIARIEVTRRGKVRRGRLYYLRQLTGKKARVKEKGRY</sequence>
<proteinExistence type="inferred from homology"/>
<feature type="chain" id="PRO_1000049758" description="Large ribosomal subunit protein bL19">
    <location>
        <begin position="1"/>
        <end position="116"/>
    </location>
</feature>